<accession>O29342</accession>
<protein>
    <recommendedName>
        <fullName evidence="1">Aspartate--tRNA(Asp/Asn) ligase</fullName>
        <ecNumber evidence="1">6.1.1.23</ecNumber>
    </recommendedName>
    <alternativeName>
        <fullName evidence="1">Aspartyl-tRNA synthetase</fullName>
        <shortName evidence="1">AspRS</shortName>
    </alternativeName>
    <alternativeName>
        <fullName evidence="1">Non-discriminating aspartyl-tRNA synthetase</fullName>
        <shortName evidence="1">ND-AspRS</shortName>
    </alternativeName>
</protein>
<comment type="function">
    <text evidence="1">Aspartyl-tRNA synthetase with relaxed tRNA specificity since it is able to aspartylate not only its cognate tRNA(Asp) but also tRNA(Asn). Reaction proceeds in two steps: L-aspartate is first activated by ATP to form Asp-AMP and then transferred to the acceptor end of tRNA(Asp/Asn).</text>
</comment>
<comment type="catalytic activity">
    <reaction evidence="1">
        <text>tRNA(Asx) + L-aspartate + ATP = L-aspartyl-tRNA(Asx) + AMP + diphosphate</text>
        <dbReference type="Rhea" id="RHEA:18349"/>
        <dbReference type="Rhea" id="RHEA-COMP:9710"/>
        <dbReference type="Rhea" id="RHEA-COMP:9711"/>
        <dbReference type="ChEBI" id="CHEBI:29991"/>
        <dbReference type="ChEBI" id="CHEBI:30616"/>
        <dbReference type="ChEBI" id="CHEBI:33019"/>
        <dbReference type="ChEBI" id="CHEBI:78442"/>
        <dbReference type="ChEBI" id="CHEBI:78516"/>
        <dbReference type="ChEBI" id="CHEBI:456215"/>
        <dbReference type="EC" id="6.1.1.23"/>
    </reaction>
</comment>
<comment type="cofactor">
    <cofactor evidence="1">
        <name>Mg(2+)</name>
        <dbReference type="ChEBI" id="CHEBI:18420"/>
    </cofactor>
    <text evidence="1">Binds 3 Mg(2+) cations per subunit. The strongest magnesium site (Mg1) is bound to the beta- and gamma-phosphates of ATP and four water molecules complete its coordination sphere.</text>
</comment>
<comment type="subunit">
    <text evidence="1">Homodimer.</text>
</comment>
<comment type="subcellular location">
    <subcellularLocation>
        <location evidence="1">Cytoplasm</location>
    </subcellularLocation>
</comment>
<comment type="similarity">
    <text evidence="1">Belongs to the class-II aminoacyl-tRNA synthetase family. Type 2 subfamily.</text>
</comment>
<keyword id="KW-0030">Aminoacyl-tRNA synthetase</keyword>
<keyword id="KW-0067">ATP-binding</keyword>
<keyword id="KW-0963">Cytoplasm</keyword>
<keyword id="KW-0436">Ligase</keyword>
<keyword id="KW-0460">Magnesium</keyword>
<keyword id="KW-0479">Metal-binding</keyword>
<keyword id="KW-0547">Nucleotide-binding</keyword>
<keyword id="KW-0648">Protein biosynthesis</keyword>
<keyword id="KW-1185">Reference proteome</keyword>
<proteinExistence type="inferred from homology"/>
<evidence type="ECO:0000255" key="1">
    <source>
        <dbReference type="HAMAP-Rule" id="MF_02075"/>
    </source>
</evidence>
<gene>
    <name evidence="1" type="primary">aspS</name>
    <name type="ordered locus">AF_0920</name>
</gene>
<feature type="chain" id="PRO_0000110990" description="Aspartate--tRNA(Asp/Asn) ligase">
    <location>
        <begin position="1"/>
        <end position="430"/>
    </location>
</feature>
<feature type="region of interest" description="Aspartate" evidence="1">
    <location>
        <begin position="190"/>
        <end position="193"/>
    </location>
</feature>
<feature type="binding site" evidence="1">
    <location>
        <position position="168"/>
    </location>
    <ligand>
        <name>L-aspartate</name>
        <dbReference type="ChEBI" id="CHEBI:29991"/>
    </ligand>
</feature>
<feature type="binding site" evidence="1">
    <location>
        <begin position="212"/>
        <end position="214"/>
    </location>
    <ligand>
        <name>ATP</name>
        <dbReference type="ChEBI" id="CHEBI:30616"/>
    </ligand>
</feature>
<feature type="binding site" evidence="1">
    <location>
        <position position="212"/>
    </location>
    <ligand>
        <name>L-aspartate</name>
        <dbReference type="ChEBI" id="CHEBI:29991"/>
    </ligand>
</feature>
<feature type="binding site" evidence="1">
    <location>
        <begin position="220"/>
        <end position="222"/>
    </location>
    <ligand>
        <name>ATP</name>
        <dbReference type="ChEBI" id="CHEBI:30616"/>
    </ligand>
</feature>
<feature type="binding site" evidence="1">
    <location>
        <position position="353"/>
    </location>
    <ligand>
        <name>ATP</name>
        <dbReference type="ChEBI" id="CHEBI:30616"/>
    </ligand>
</feature>
<feature type="binding site" evidence="1">
    <location>
        <position position="353"/>
    </location>
    <ligand>
        <name>Mg(2+)</name>
        <dbReference type="ChEBI" id="CHEBI:18420"/>
        <label>2</label>
    </ligand>
</feature>
<feature type="binding site" evidence="1">
    <location>
        <position position="353"/>
    </location>
    <ligand>
        <name>Mg(2+)</name>
        <dbReference type="ChEBI" id="CHEBI:18420"/>
        <label>3</label>
    </ligand>
</feature>
<feature type="binding site" evidence="1">
    <location>
        <position position="356"/>
    </location>
    <ligand>
        <name>L-aspartate</name>
        <dbReference type="ChEBI" id="CHEBI:29991"/>
    </ligand>
</feature>
<feature type="binding site" evidence="1">
    <location>
        <position position="356"/>
    </location>
    <ligand>
        <name>Mg(2+)</name>
        <dbReference type="ChEBI" id="CHEBI:18420"/>
        <label>2</label>
    </ligand>
</feature>
<feature type="binding site" evidence="1">
    <location>
        <position position="360"/>
    </location>
    <ligand>
        <name>L-aspartate</name>
        <dbReference type="ChEBI" id="CHEBI:29991"/>
    </ligand>
</feature>
<feature type="binding site" evidence="1">
    <location>
        <begin position="401"/>
        <end position="404"/>
    </location>
    <ligand>
        <name>ATP</name>
        <dbReference type="ChEBI" id="CHEBI:30616"/>
    </ligand>
</feature>
<feature type="site" description="Important for tRNA non-discrimination" evidence="1">
    <location>
        <position position="83"/>
    </location>
</feature>
<sequence length="430" mass="49499">MRVYTADVKPEMEGQKVTLYGWVHEVRDLGGLVFILLRDREGIVQITLPRKFVSKQVFKLAKKIRRESVIAVTGEVRREEKAPGGVEIIPESIEVLNEADAPLPLEVTEKVPAELDTRLDHRFMDLRRPRVQAIFRIRHQVMQSVREFLSEEGFIEVHTPKIVSTATEGGTELFPISYFEKEAFLNQSPQLYKQVLMAAGFEKVFEIGPIFRAEEHNTTRHLNEAISIDIEMSFTDHNGVMDVLERLVQRVYEDVAEKCERYLGWLEVSLEIPELPFPRITYDEAREIAARKGEEIPWGEDLSTNALKLVGEEMGGLYFITDWPTESKPFYAMPYEDRPEISKSFDLMHGWLELSSGAQRIHLYDMLVESIKAKGMEPESFGFYLEAFRYGMPPHAGWGLGAERLIMSMLGLKNVREAVLFPRDRHRLVP</sequence>
<name>SYDND_ARCFU</name>
<dbReference type="EC" id="6.1.1.23" evidence="1"/>
<dbReference type="EMBL" id="AE000782">
    <property type="protein sequence ID" value="AAB90318.1"/>
    <property type="molecule type" value="Genomic_DNA"/>
</dbReference>
<dbReference type="PIR" id="H69364">
    <property type="entry name" value="H69364"/>
</dbReference>
<dbReference type="RefSeq" id="WP_010878420.1">
    <property type="nucleotide sequence ID" value="NC_000917.1"/>
</dbReference>
<dbReference type="SMR" id="O29342"/>
<dbReference type="STRING" id="224325.AF_0920"/>
<dbReference type="PaxDb" id="224325-AF_0920"/>
<dbReference type="EnsemblBacteria" id="AAB90318">
    <property type="protein sequence ID" value="AAB90318"/>
    <property type="gene ID" value="AF_0920"/>
</dbReference>
<dbReference type="GeneID" id="24794518"/>
<dbReference type="KEGG" id="afu:AF_0920"/>
<dbReference type="eggNOG" id="arCOG00406">
    <property type="taxonomic scope" value="Archaea"/>
</dbReference>
<dbReference type="HOGENOM" id="CLU_004553_2_1_2"/>
<dbReference type="OrthoDB" id="5908at2157"/>
<dbReference type="PhylomeDB" id="O29342"/>
<dbReference type="Proteomes" id="UP000002199">
    <property type="component" value="Chromosome"/>
</dbReference>
<dbReference type="GO" id="GO:0017101">
    <property type="term" value="C:aminoacyl-tRNA synthetase multienzyme complex"/>
    <property type="evidence" value="ECO:0007669"/>
    <property type="project" value="TreeGrafter"/>
</dbReference>
<dbReference type="GO" id="GO:0005829">
    <property type="term" value="C:cytosol"/>
    <property type="evidence" value="ECO:0007669"/>
    <property type="project" value="TreeGrafter"/>
</dbReference>
<dbReference type="GO" id="GO:0004815">
    <property type="term" value="F:aspartate-tRNA ligase activity"/>
    <property type="evidence" value="ECO:0007669"/>
    <property type="project" value="UniProtKB-UniRule"/>
</dbReference>
<dbReference type="GO" id="GO:0050560">
    <property type="term" value="F:aspartate-tRNA(Asn) ligase activity"/>
    <property type="evidence" value="ECO:0007669"/>
    <property type="project" value="UniProtKB-EC"/>
</dbReference>
<dbReference type="GO" id="GO:0005524">
    <property type="term" value="F:ATP binding"/>
    <property type="evidence" value="ECO:0007669"/>
    <property type="project" value="UniProtKB-UniRule"/>
</dbReference>
<dbReference type="GO" id="GO:0000287">
    <property type="term" value="F:magnesium ion binding"/>
    <property type="evidence" value="ECO:0007669"/>
    <property type="project" value="UniProtKB-UniRule"/>
</dbReference>
<dbReference type="GO" id="GO:0003723">
    <property type="term" value="F:RNA binding"/>
    <property type="evidence" value="ECO:0007669"/>
    <property type="project" value="TreeGrafter"/>
</dbReference>
<dbReference type="GO" id="GO:0006422">
    <property type="term" value="P:aspartyl-tRNA aminoacylation"/>
    <property type="evidence" value="ECO:0007669"/>
    <property type="project" value="UniProtKB-UniRule"/>
</dbReference>
<dbReference type="CDD" id="cd00776">
    <property type="entry name" value="AsxRS_core"/>
    <property type="match status" value="1"/>
</dbReference>
<dbReference type="CDD" id="cd04316">
    <property type="entry name" value="ND_PkAspRS_like_N"/>
    <property type="match status" value="1"/>
</dbReference>
<dbReference type="FunFam" id="3.30.930.10:FF:000038">
    <property type="entry name" value="Aspartate--tRNA ligase"/>
    <property type="match status" value="1"/>
</dbReference>
<dbReference type="Gene3D" id="3.30.930.10">
    <property type="entry name" value="Bira Bifunctional Protein, Domain 2"/>
    <property type="match status" value="1"/>
</dbReference>
<dbReference type="Gene3D" id="2.40.50.140">
    <property type="entry name" value="Nucleic acid-binding proteins"/>
    <property type="match status" value="1"/>
</dbReference>
<dbReference type="HAMAP" id="MF_02075">
    <property type="entry name" value="Asp_tRNA_synth_type2"/>
    <property type="match status" value="1"/>
</dbReference>
<dbReference type="InterPro" id="IPR004364">
    <property type="entry name" value="Aa-tRNA-synt_II"/>
</dbReference>
<dbReference type="InterPro" id="IPR006195">
    <property type="entry name" value="aa-tRNA-synth_II"/>
</dbReference>
<dbReference type="InterPro" id="IPR045864">
    <property type="entry name" value="aa-tRNA-synth_II/BPL/LPL"/>
</dbReference>
<dbReference type="InterPro" id="IPR004523">
    <property type="entry name" value="Asp-tRNA_synthase_2"/>
</dbReference>
<dbReference type="InterPro" id="IPR002312">
    <property type="entry name" value="Asp/Asn-tRNA-synth_IIb"/>
</dbReference>
<dbReference type="InterPro" id="IPR012340">
    <property type="entry name" value="NA-bd_OB-fold"/>
</dbReference>
<dbReference type="InterPro" id="IPR004365">
    <property type="entry name" value="NA-bd_OB_tRNA"/>
</dbReference>
<dbReference type="NCBIfam" id="TIGR00458">
    <property type="entry name" value="aspS_nondisc"/>
    <property type="match status" value="1"/>
</dbReference>
<dbReference type="NCBIfam" id="NF003483">
    <property type="entry name" value="PRK05159.1"/>
    <property type="match status" value="1"/>
</dbReference>
<dbReference type="PANTHER" id="PTHR43450:SF1">
    <property type="entry name" value="ASPARTATE--TRNA LIGASE, CYTOPLASMIC"/>
    <property type="match status" value="1"/>
</dbReference>
<dbReference type="PANTHER" id="PTHR43450">
    <property type="entry name" value="ASPARTYL-TRNA SYNTHETASE"/>
    <property type="match status" value="1"/>
</dbReference>
<dbReference type="Pfam" id="PF00152">
    <property type="entry name" value="tRNA-synt_2"/>
    <property type="match status" value="1"/>
</dbReference>
<dbReference type="Pfam" id="PF01336">
    <property type="entry name" value="tRNA_anti-codon"/>
    <property type="match status" value="1"/>
</dbReference>
<dbReference type="PRINTS" id="PR01042">
    <property type="entry name" value="TRNASYNTHASP"/>
</dbReference>
<dbReference type="SUPFAM" id="SSF55681">
    <property type="entry name" value="Class II aaRS and biotin synthetases"/>
    <property type="match status" value="1"/>
</dbReference>
<dbReference type="SUPFAM" id="SSF50249">
    <property type="entry name" value="Nucleic acid-binding proteins"/>
    <property type="match status" value="1"/>
</dbReference>
<dbReference type="PROSITE" id="PS50862">
    <property type="entry name" value="AA_TRNA_LIGASE_II"/>
    <property type="match status" value="1"/>
</dbReference>
<reference key="1">
    <citation type="journal article" date="1997" name="Nature">
        <title>The complete genome sequence of the hyperthermophilic, sulphate-reducing archaeon Archaeoglobus fulgidus.</title>
        <authorList>
            <person name="Klenk H.-P."/>
            <person name="Clayton R.A."/>
            <person name="Tomb J.-F."/>
            <person name="White O."/>
            <person name="Nelson K.E."/>
            <person name="Ketchum K.A."/>
            <person name="Dodson R.J."/>
            <person name="Gwinn M.L."/>
            <person name="Hickey E.K."/>
            <person name="Peterson J.D."/>
            <person name="Richardson D.L."/>
            <person name="Kerlavage A.R."/>
            <person name="Graham D.E."/>
            <person name="Kyrpides N.C."/>
            <person name="Fleischmann R.D."/>
            <person name="Quackenbush J."/>
            <person name="Lee N.H."/>
            <person name="Sutton G.G."/>
            <person name="Gill S.R."/>
            <person name="Kirkness E.F."/>
            <person name="Dougherty B.A."/>
            <person name="McKenney K."/>
            <person name="Adams M.D."/>
            <person name="Loftus B.J."/>
            <person name="Peterson S.N."/>
            <person name="Reich C.I."/>
            <person name="McNeil L.K."/>
            <person name="Badger J.H."/>
            <person name="Glodek A."/>
            <person name="Zhou L."/>
            <person name="Overbeek R."/>
            <person name="Gocayne J.D."/>
            <person name="Weidman J.F."/>
            <person name="McDonald L.A."/>
            <person name="Utterback T.R."/>
            <person name="Cotton M.D."/>
            <person name="Spriggs T."/>
            <person name="Artiach P."/>
            <person name="Kaine B.P."/>
            <person name="Sykes S.M."/>
            <person name="Sadow P.W."/>
            <person name="D'Andrea K.P."/>
            <person name="Bowman C."/>
            <person name="Fujii C."/>
            <person name="Garland S.A."/>
            <person name="Mason T.M."/>
            <person name="Olsen G.J."/>
            <person name="Fraser C.M."/>
            <person name="Smith H.O."/>
            <person name="Woese C.R."/>
            <person name="Venter J.C."/>
        </authorList>
    </citation>
    <scope>NUCLEOTIDE SEQUENCE [LARGE SCALE GENOMIC DNA]</scope>
    <source>
        <strain>ATCC 49558 / DSM 4304 / JCM 9628 / NBRC 100126 / VC-16</strain>
    </source>
</reference>
<organism>
    <name type="scientific">Archaeoglobus fulgidus (strain ATCC 49558 / DSM 4304 / JCM 9628 / NBRC 100126 / VC-16)</name>
    <dbReference type="NCBI Taxonomy" id="224325"/>
    <lineage>
        <taxon>Archaea</taxon>
        <taxon>Methanobacteriati</taxon>
        <taxon>Methanobacteriota</taxon>
        <taxon>Archaeoglobi</taxon>
        <taxon>Archaeoglobales</taxon>
        <taxon>Archaeoglobaceae</taxon>
        <taxon>Archaeoglobus</taxon>
    </lineage>
</organism>